<name>PP1RB_DANRE</name>
<gene>
    <name type="primary">ppp1r11</name>
    <name type="ORF">zgc:110245</name>
</gene>
<dbReference type="EC" id="2.3.2.27"/>
<dbReference type="EMBL" id="BC092823">
    <property type="protein sequence ID" value="AAH92823.1"/>
    <property type="molecule type" value="mRNA"/>
</dbReference>
<dbReference type="RefSeq" id="NP_001017627.1">
    <property type="nucleotide sequence ID" value="NM_001017627.1"/>
</dbReference>
<dbReference type="SMR" id="Q568K2"/>
<dbReference type="FunCoup" id="Q568K2">
    <property type="interactions" value="944"/>
</dbReference>
<dbReference type="STRING" id="7955.ENSDARP00000052351"/>
<dbReference type="iPTMnet" id="Q568K2"/>
<dbReference type="PaxDb" id="7955-ENSDARP00000052351"/>
<dbReference type="Ensembl" id="ENSDART00000052352">
    <property type="protein sequence ID" value="ENSDARP00000052351"/>
    <property type="gene ID" value="ENSDARG00000036063"/>
</dbReference>
<dbReference type="GeneID" id="550290"/>
<dbReference type="KEGG" id="dre:550290"/>
<dbReference type="AGR" id="ZFIN:ZDB-GENE-050417-99"/>
<dbReference type="CTD" id="6992"/>
<dbReference type="ZFIN" id="ZDB-GENE-050417-99">
    <property type="gene designation" value="ppp1r11"/>
</dbReference>
<dbReference type="eggNOG" id="KOG4102">
    <property type="taxonomic scope" value="Eukaryota"/>
</dbReference>
<dbReference type="HOGENOM" id="CLU_098333_6_2_1"/>
<dbReference type="InParanoid" id="Q568K2"/>
<dbReference type="OMA" id="CILGHSR"/>
<dbReference type="OrthoDB" id="307488at2759"/>
<dbReference type="PhylomeDB" id="Q568K2"/>
<dbReference type="TreeFam" id="TF352541"/>
<dbReference type="UniPathway" id="UPA00143"/>
<dbReference type="PRO" id="PR:Q568K2"/>
<dbReference type="Proteomes" id="UP000000437">
    <property type="component" value="Chromosome 19"/>
</dbReference>
<dbReference type="Bgee" id="ENSDARG00000036063">
    <property type="expression patterns" value="Expressed in mature ovarian follicle and 26 other cell types or tissues"/>
</dbReference>
<dbReference type="ExpressionAtlas" id="Q568K2">
    <property type="expression patterns" value="baseline"/>
</dbReference>
<dbReference type="GO" id="GO:0005634">
    <property type="term" value="C:nucleus"/>
    <property type="evidence" value="ECO:0000318"/>
    <property type="project" value="GO_Central"/>
</dbReference>
<dbReference type="GO" id="GO:0008157">
    <property type="term" value="F:protein phosphatase 1 binding"/>
    <property type="evidence" value="ECO:0000318"/>
    <property type="project" value="GO_Central"/>
</dbReference>
<dbReference type="GO" id="GO:0004865">
    <property type="term" value="F:protein serine/threonine phosphatase inhibitor activity"/>
    <property type="evidence" value="ECO:0000318"/>
    <property type="project" value="GO_Central"/>
</dbReference>
<dbReference type="GO" id="GO:0061630">
    <property type="term" value="F:ubiquitin protein ligase activity"/>
    <property type="evidence" value="ECO:0000250"/>
    <property type="project" value="UniProtKB"/>
</dbReference>
<dbReference type="GO" id="GO:0050830">
    <property type="term" value="P:defense response to Gram-positive bacterium"/>
    <property type="evidence" value="ECO:0000250"/>
    <property type="project" value="UniProtKB"/>
</dbReference>
<dbReference type="GO" id="GO:0001818">
    <property type="term" value="P:negative regulation of cytokine production"/>
    <property type="evidence" value="ECO:0000250"/>
    <property type="project" value="UniProtKB"/>
</dbReference>
<dbReference type="GO" id="GO:0016567">
    <property type="term" value="P:protein ubiquitination"/>
    <property type="evidence" value="ECO:0007669"/>
    <property type="project" value="UniProtKB-UniPathway"/>
</dbReference>
<dbReference type="GO" id="GO:0006511">
    <property type="term" value="P:ubiquitin-dependent protein catabolic process"/>
    <property type="evidence" value="ECO:0000250"/>
    <property type="project" value="UniProtKB"/>
</dbReference>
<dbReference type="InterPro" id="IPR011107">
    <property type="entry name" value="PPI_Ypi1"/>
</dbReference>
<dbReference type="PANTHER" id="PTHR20835:SF0">
    <property type="entry name" value="E3 UBIQUITIN-PROTEIN LIGASE PPP1R11"/>
    <property type="match status" value="1"/>
</dbReference>
<dbReference type="PANTHER" id="PTHR20835">
    <property type="entry name" value="E3 UBIQUITIN-PROTEIN LIGASE PPP1R11-RELATED"/>
    <property type="match status" value="1"/>
</dbReference>
<dbReference type="Pfam" id="PF07491">
    <property type="entry name" value="PPI_Ypi1"/>
    <property type="match status" value="1"/>
</dbReference>
<organism>
    <name type="scientific">Danio rerio</name>
    <name type="common">Zebrafish</name>
    <name type="synonym">Brachydanio rerio</name>
    <dbReference type="NCBI Taxonomy" id="7955"/>
    <lineage>
        <taxon>Eukaryota</taxon>
        <taxon>Metazoa</taxon>
        <taxon>Chordata</taxon>
        <taxon>Craniata</taxon>
        <taxon>Vertebrata</taxon>
        <taxon>Euteleostomi</taxon>
        <taxon>Actinopterygii</taxon>
        <taxon>Neopterygii</taxon>
        <taxon>Teleostei</taxon>
        <taxon>Ostariophysi</taxon>
        <taxon>Cypriniformes</taxon>
        <taxon>Danionidae</taxon>
        <taxon>Danioninae</taxon>
        <taxon>Danio</taxon>
    </lineage>
</organism>
<keyword id="KW-0597">Phosphoprotein</keyword>
<keyword id="KW-0650">Protein phosphatase inhibitor</keyword>
<keyword id="KW-1185">Reference proteome</keyword>
<keyword id="KW-0808">Transferase</keyword>
<keyword id="KW-0833">Ubl conjugation pathway</keyword>
<protein>
    <recommendedName>
        <fullName>E3 ubiquitin-protein ligase PPP1R11</fullName>
        <ecNumber>2.3.2.27</ecNumber>
    </recommendedName>
    <alternativeName>
        <fullName>Protein phosphatase 1 regulatory subunit 11</fullName>
    </alternativeName>
</protein>
<accession>Q568K2</accession>
<evidence type="ECO:0000250" key="1">
    <source>
        <dbReference type="UniProtKB" id="O60927"/>
    </source>
</evidence>
<evidence type="ECO:0000256" key="2">
    <source>
        <dbReference type="SAM" id="MobiDB-lite"/>
    </source>
</evidence>
<evidence type="ECO:0000269" key="3">
    <source>
    </source>
</evidence>
<sequence length="122" mass="13106">MAEVPGTSSETITETVQTGTPPPPQQEGRSLTIKLRKRKTEKKVEWSSDTVDNEHLGRRSSKCCCIYEKPRQFGESSSESEGDDEEGCGSAHCILGHGRRGHGQREGGGTTVPPSSGGTNPH</sequence>
<reference key="1">
    <citation type="submission" date="2005-04" db="EMBL/GenBank/DDBJ databases">
        <authorList>
            <consortium name="NIH - Zebrafish Gene Collection (ZGC) project"/>
        </authorList>
    </citation>
    <scope>NUCLEOTIDE SEQUENCE [LARGE SCALE MRNA]</scope>
    <source>
        <tissue>Ovary</tissue>
    </source>
</reference>
<reference key="2">
    <citation type="journal article" date="2008" name="J. Proteome Res.">
        <title>Online automated in vivo zebrafish phosphoproteomics: from large-scale analysis down to a single embryo.</title>
        <authorList>
            <person name="Lemeer S."/>
            <person name="Pinkse M.W.H."/>
            <person name="Mohammed S."/>
            <person name="van Breukelen B."/>
            <person name="den Hertog J."/>
            <person name="Slijper M."/>
            <person name="Heck A.J.R."/>
        </authorList>
    </citation>
    <scope>PHOSPHORYLATION [LARGE SCALE ANALYSIS] AT THR-20</scope>
    <scope>IDENTIFICATION BY MASS SPECTROMETRY</scope>
    <source>
        <tissue>Embryo</tissue>
    </source>
</reference>
<feature type="chain" id="PRO_0000239624" description="E3 ubiquitin-protein ligase PPP1R11">
    <location>
        <begin position="1"/>
        <end position="122"/>
    </location>
</feature>
<feature type="region of interest" description="Disordered" evidence="2">
    <location>
        <begin position="1"/>
        <end position="33"/>
    </location>
</feature>
<feature type="region of interest" description="Atypical RING finger domain 1" evidence="1">
    <location>
        <begin position="55"/>
        <end position="65"/>
    </location>
</feature>
<feature type="region of interest" description="Disordered" evidence="2">
    <location>
        <begin position="72"/>
        <end position="122"/>
    </location>
</feature>
<feature type="region of interest" description="Atypical RING finger domain 2" evidence="1">
    <location>
        <begin position="88"/>
        <end position="97"/>
    </location>
</feature>
<feature type="compositionally biased region" description="Polar residues" evidence="2">
    <location>
        <begin position="1"/>
        <end position="12"/>
    </location>
</feature>
<feature type="compositionally biased region" description="Acidic residues" evidence="2">
    <location>
        <begin position="78"/>
        <end position="87"/>
    </location>
</feature>
<feature type="compositionally biased region" description="Low complexity" evidence="2">
    <location>
        <begin position="111"/>
        <end position="122"/>
    </location>
</feature>
<feature type="modified residue" description="Phosphothreonine" evidence="3">
    <location>
        <position position="20"/>
    </location>
</feature>
<proteinExistence type="evidence at protein level"/>
<comment type="function">
    <text evidence="1">Atypical E3 ubiquitin-protein ligase which ubiquitinates TLR2 at 'Lys-754' leading to its degradation by the proteasome. Inhibitor of protein phosphatase 1.</text>
</comment>
<comment type="catalytic activity">
    <reaction evidence="1">
        <text>S-ubiquitinyl-[E2 ubiquitin-conjugating enzyme]-L-cysteine + [acceptor protein]-L-lysine = [E2 ubiquitin-conjugating enzyme]-L-cysteine + N(6)-ubiquitinyl-[acceptor protein]-L-lysine.</text>
        <dbReference type="EC" id="2.3.2.27"/>
    </reaction>
</comment>
<comment type="pathway">
    <text>Protein modification; protein ubiquitination.</text>
</comment>